<gene>
    <name evidence="1" type="primary">hutU</name>
    <name type="ordered locus">Swit_4630</name>
</gene>
<comment type="function">
    <text evidence="1">Catalyzes the conversion of urocanate to 4-imidazolone-5-propionate.</text>
</comment>
<comment type="catalytic activity">
    <reaction evidence="1">
        <text>4-imidazolone-5-propanoate = trans-urocanate + H2O</text>
        <dbReference type="Rhea" id="RHEA:13101"/>
        <dbReference type="ChEBI" id="CHEBI:15377"/>
        <dbReference type="ChEBI" id="CHEBI:17771"/>
        <dbReference type="ChEBI" id="CHEBI:77893"/>
        <dbReference type="EC" id="4.2.1.49"/>
    </reaction>
</comment>
<comment type="cofactor">
    <cofactor evidence="1">
        <name>NAD(+)</name>
        <dbReference type="ChEBI" id="CHEBI:57540"/>
    </cofactor>
    <text evidence="1">Binds 1 NAD(+) per subunit.</text>
</comment>
<comment type="pathway">
    <text evidence="1">Amino-acid degradation; L-histidine degradation into L-glutamate; N-formimidoyl-L-glutamate from L-histidine: step 2/3.</text>
</comment>
<comment type="subcellular location">
    <subcellularLocation>
        <location evidence="1">Cytoplasm</location>
    </subcellularLocation>
</comment>
<comment type="similarity">
    <text evidence="1">Belongs to the urocanase family.</text>
</comment>
<organism>
    <name type="scientific">Rhizorhabdus wittichii (strain DSM 6014 / CCUG 31198 / JCM 15750 / NBRC 105917 / EY 4224 / RW1)</name>
    <name type="common">Sphingomonas wittichii</name>
    <dbReference type="NCBI Taxonomy" id="392499"/>
    <lineage>
        <taxon>Bacteria</taxon>
        <taxon>Pseudomonadati</taxon>
        <taxon>Pseudomonadota</taxon>
        <taxon>Alphaproteobacteria</taxon>
        <taxon>Sphingomonadales</taxon>
        <taxon>Sphingomonadaceae</taxon>
        <taxon>Rhizorhabdus</taxon>
    </lineage>
</organism>
<dbReference type="EC" id="4.2.1.49" evidence="1"/>
<dbReference type="EMBL" id="CP000699">
    <property type="protein sequence ID" value="ABQ70968.1"/>
    <property type="molecule type" value="Genomic_DNA"/>
</dbReference>
<dbReference type="SMR" id="A5VFA2"/>
<dbReference type="STRING" id="392499.Swit_4630"/>
<dbReference type="PaxDb" id="392499-Swit_4630"/>
<dbReference type="KEGG" id="swi:Swit_4630"/>
<dbReference type="eggNOG" id="COG2987">
    <property type="taxonomic scope" value="Bacteria"/>
</dbReference>
<dbReference type="HOGENOM" id="CLU_018868_0_1_5"/>
<dbReference type="OrthoDB" id="9764874at2"/>
<dbReference type="UniPathway" id="UPA00379">
    <property type="reaction ID" value="UER00550"/>
</dbReference>
<dbReference type="Proteomes" id="UP000001989">
    <property type="component" value="Chromosome"/>
</dbReference>
<dbReference type="GO" id="GO:0005737">
    <property type="term" value="C:cytoplasm"/>
    <property type="evidence" value="ECO:0007669"/>
    <property type="project" value="UniProtKB-SubCell"/>
</dbReference>
<dbReference type="GO" id="GO:0016153">
    <property type="term" value="F:urocanate hydratase activity"/>
    <property type="evidence" value="ECO:0007669"/>
    <property type="project" value="UniProtKB-UniRule"/>
</dbReference>
<dbReference type="GO" id="GO:0019556">
    <property type="term" value="P:L-histidine catabolic process to glutamate and formamide"/>
    <property type="evidence" value="ECO:0007669"/>
    <property type="project" value="UniProtKB-UniPathway"/>
</dbReference>
<dbReference type="GO" id="GO:0019557">
    <property type="term" value="P:L-histidine catabolic process to glutamate and formate"/>
    <property type="evidence" value="ECO:0007669"/>
    <property type="project" value="UniProtKB-UniPathway"/>
</dbReference>
<dbReference type="FunFam" id="3.40.50.10730:FF:000001">
    <property type="entry name" value="Urocanate hydratase"/>
    <property type="match status" value="1"/>
</dbReference>
<dbReference type="Gene3D" id="3.40.50.10730">
    <property type="entry name" value="Urocanase like domains"/>
    <property type="match status" value="1"/>
</dbReference>
<dbReference type="Gene3D" id="3.40.1770.10">
    <property type="entry name" value="Urocanase superfamily"/>
    <property type="match status" value="1"/>
</dbReference>
<dbReference type="HAMAP" id="MF_00577">
    <property type="entry name" value="HutU"/>
    <property type="match status" value="1"/>
</dbReference>
<dbReference type="InterPro" id="IPR055351">
    <property type="entry name" value="Urocanase"/>
</dbReference>
<dbReference type="InterPro" id="IPR023637">
    <property type="entry name" value="Urocanase-like"/>
</dbReference>
<dbReference type="InterPro" id="IPR035401">
    <property type="entry name" value="Urocanase_C"/>
</dbReference>
<dbReference type="InterPro" id="IPR038364">
    <property type="entry name" value="Urocanase_central_sf"/>
</dbReference>
<dbReference type="InterPro" id="IPR023636">
    <property type="entry name" value="Urocanase_CS"/>
</dbReference>
<dbReference type="InterPro" id="IPR035400">
    <property type="entry name" value="Urocanase_N"/>
</dbReference>
<dbReference type="InterPro" id="IPR035085">
    <property type="entry name" value="Urocanase_Rossmann-like"/>
</dbReference>
<dbReference type="InterPro" id="IPR036190">
    <property type="entry name" value="Urocanase_sf"/>
</dbReference>
<dbReference type="NCBIfam" id="TIGR01228">
    <property type="entry name" value="hutU"/>
    <property type="match status" value="1"/>
</dbReference>
<dbReference type="NCBIfam" id="NF003820">
    <property type="entry name" value="PRK05414.1"/>
    <property type="match status" value="1"/>
</dbReference>
<dbReference type="PANTHER" id="PTHR12216">
    <property type="entry name" value="UROCANATE HYDRATASE"/>
    <property type="match status" value="1"/>
</dbReference>
<dbReference type="PANTHER" id="PTHR12216:SF4">
    <property type="entry name" value="UROCANATE HYDRATASE"/>
    <property type="match status" value="1"/>
</dbReference>
<dbReference type="Pfam" id="PF01175">
    <property type="entry name" value="Urocanase"/>
    <property type="match status" value="1"/>
</dbReference>
<dbReference type="Pfam" id="PF17392">
    <property type="entry name" value="Urocanase_C"/>
    <property type="match status" value="1"/>
</dbReference>
<dbReference type="Pfam" id="PF17391">
    <property type="entry name" value="Urocanase_N"/>
    <property type="match status" value="1"/>
</dbReference>
<dbReference type="PIRSF" id="PIRSF001423">
    <property type="entry name" value="Urocanate_hydrat"/>
    <property type="match status" value="1"/>
</dbReference>
<dbReference type="SUPFAM" id="SSF111326">
    <property type="entry name" value="Urocanase"/>
    <property type="match status" value="1"/>
</dbReference>
<dbReference type="PROSITE" id="PS01233">
    <property type="entry name" value="UROCANASE"/>
    <property type="match status" value="1"/>
</dbReference>
<reference key="1">
    <citation type="journal article" date="2010" name="J. Bacteriol.">
        <title>Genome sequence of the dioxin-mineralizing bacterium Sphingomonas wittichii RW1.</title>
        <authorList>
            <person name="Miller T.R."/>
            <person name="Delcher A.L."/>
            <person name="Salzberg S.L."/>
            <person name="Saunders E."/>
            <person name="Detter J.C."/>
            <person name="Halden R.U."/>
        </authorList>
    </citation>
    <scope>NUCLEOTIDE SEQUENCE [LARGE SCALE GENOMIC DNA]</scope>
    <source>
        <strain>DSM 6014 / CCUG 31198 / JCM 15750 / NBRC 105917 / EY 4224 / RW1</strain>
    </source>
</reference>
<keyword id="KW-0963">Cytoplasm</keyword>
<keyword id="KW-0369">Histidine metabolism</keyword>
<keyword id="KW-0456">Lyase</keyword>
<keyword id="KW-0520">NAD</keyword>
<keyword id="KW-1185">Reference proteome</keyword>
<protein>
    <recommendedName>
        <fullName evidence="1">Urocanate hydratase</fullName>
        <shortName evidence="1">Urocanase</shortName>
        <ecNumber evidence="1">4.2.1.49</ecNumber>
    </recommendedName>
    <alternativeName>
        <fullName evidence="1">Imidazolonepropionate hydrolase</fullName>
    </alternativeName>
</protein>
<accession>A5VFA2</accession>
<feature type="chain" id="PRO_1000025157" description="Urocanate hydratase">
    <location>
        <begin position="1"/>
        <end position="555"/>
    </location>
</feature>
<feature type="active site" evidence="1">
    <location>
        <position position="409"/>
    </location>
</feature>
<feature type="binding site" evidence="1">
    <location>
        <begin position="51"/>
        <end position="52"/>
    </location>
    <ligand>
        <name>NAD(+)</name>
        <dbReference type="ChEBI" id="CHEBI:57540"/>
    </ligand>
</feature>
<feature type="binding site" evidence="1">
    <location>
        <position position="129"/>
    </location>
    <ligand>
        <name>NAD(+)</name>
        <dbReference type="ChEBI" id="CHEBI:57540"/>
    </ligand>
</feature>
<feature type="binding site" evidence="1">
    <location>
        <begin position="175"/>
        <end position="177"/>
    </location>
    <ligand>
        <name>NAD(+)</name>
        <dbReference type="ChEBI" id="CHEBI:57540"/>
    </ligand>
</feature>
<feature type="binding site" evidence="1">
    <location>
        <position position="195"/>
    </location>
    <ligand>
        <name>NAD(+)</name>
        <dbReference type="ChEBI" id="CHEBI:57540"/>
    </ligand>
</feature>
<feature type="binding site" evidence="1">
    <location>
        <position position="200"/>
    </location>
    <ligand>
        <name>NAD(+)</name>
        <dbReference type="ChEBI" id="CHEBI:57540"/>
    </ligand>
</feature>
<feature type="binding site" evidence="1">
    <location>
        <begin position="241"/>
        <end position="242"/>
    </location>
    <ligand>
        <name>NAD(+)</name>
        <dbReference type="ChEBI" id="CHEBI:57540"/>
    </ligand>
</feature>
<feature type="binding site" evidence="1">
    <location>
        <begin position="262"/>
        <end position="266"/>
    </location>
    <ligand>
        <name>NAD(+)</name>
        <dbReference type="ChEBI" id="CHEBI:57540"/>
    </ligand>
</feature>
<feature type="binding site" evidence="1">
    <location>
        <begin position="272"/>
        <end position="273"/>
    </location>
    <ligand>
        <name>NAD(+)</name>
        <dbReference type="ChEBI" id="CHEBI:57540"/>
    </ligand>
</feature>
<feature type="binding site" evidence="1">
    <location>
        <position position="321"/>
    </location>
    <ligand>
        <name>NAD(+)</name>
        <dbReference type="ChEBI" id="CHEBI:57540"/>
    </ligand>
</feature>
<feature type="binding site" evidence="1">
    <location>
        <position position="491"/>
    </location>
    <ligand>
        <name>NAD(+)</name>
        <dbReference type="ChEBI" id="CHEBI:57540"/>
    </ligand>
</feature>
<sequence length="555" mass="60785">MTRLDNSRVIRPATGTELSAKSWLTEAPLRMLMNNLHPDVAERPEELVVYGGIGRAARDWESYDRIVETLKRLEADQTLLVQSGKPVGVFRTHEDAPRVLIANSNLVPKWATWEHFNELDRKGLAMYGQMTAGSWIYIGTQGIVQGTYETFVEMGRQHYDDDLSGRWLLTAGLGGMGGAQPLAAVMAGASCLAIECQPSRIDMRLRTGYLDRAAETIDEAMAIIEESCAARKPLSVGLLGNAAEILPEMYRRGIRPDLLTDQTSAHDPVNGYLPAGWTVAEWIERREREPEAVAKAAKASMAVHVRAMLDFQAAGVPTVDYGNNIRQVAKDEGVANAFDFPGFVPAYIRPLFCRGIGPFRWAALSGDPEDIFKTDAKVKELLPDNHHLHRWLDMARDRIHFQGLPARICWVGLGDRHRLGLAFNEMVAKGELKAPVVIGRDHLDSGSVASPNRETEAMRDGSDAVSDWPLLNALLNTASGATWVSLHHGGGVGMGYSQHSGMVIVADGTEAAAKRLERVLWNDPATGVMRHADAGYDIALDCARDKGLDLPGILG</sequence>
<name>HUTU_RHIWR</name>
<evidence type="ECO:0000255" key="1">
    <source>
        <dbReference type="HAMAP-Rule" id="MF_00577"/>
    </source>
</evidence>
<proteinExistence type="inferred from homology"/>